<keyword id="KW-0238">DNA-binding</keyword>
<keyword id="KW-0539">Nucleus</keyword>
<keyword id="KW-1267">Proteomics identification</keyword>
<keyword id="KW-1185">Reference proteome</keyword>
<keyword id="KW-0804">Transcription</keyword>
<keyword id="KW-0805">Transcription regulation</keyword>
<proteinExistence type="evidence at protein level"/>
<organism>
    <name type="scientific">Homo sapiens</name>
    <name type="common">Human</name>
    <dbReference type="NCBI Taxonomy" id="9606"/>
    <lineage>
        <taxon>Eukaryota</taxon>
        <taxon>Metazoa</taxon>
        <taxon>Chordata</taxon>
        <taxon>Craniata</taxon>
        <taxon>Vertebrata</taxon>
        <taxon>Euteleostomi</taxon>
        <taxon>Mammalia</taxon>
        <taxon>Eutheria</taxon>
        <taxon>Euarchontoglires</taxon>
        <taxon>Primates</taxon>
        <taxon>Haplorrhini</taxon>
        <taxon>Catarrhini</taxon>
        <taxon>Hominidae</taxon>
        <taxon>Homo</taxon>
    </lineage>
</organism>
<sequence>MDRGRPAGSPLSASAEPAPLAAAIRDSRPGRTGPGPAGPGGGSRSGSGRPAAANAARERSRVQTLRHAFLELQRTLPSVPPDTKLSKLDVLLLATTYIAHLTRSLQDDAEAPADAGLGALRGDGYLHPVKKWPMRSRLYIGATGQFLKHSVSGEKTNHDNTPTDSQP</sequence>
<evidence type="ECO:0000250" key="1"/>
<evidence type="ECO:0000255" key="2">
    <source>
        <dbReference type="PROSITE-ProRule" id="PRU00981"/>
    </source>
</evidence>
<evidence type="ECO:0000256" key="3">
    <source>
        <dbReference type="SAM" id="MobiDB-lite"/>
    </source>
</evidence>
<evidence type="ECO:0000305" key="4"/>
<feature type="chain" id="PRO_0000405315" description="Transcription factor 24">
    <location>
        <begin position="1"/>
        <end position="167"/>
    </location>
</feature>
<feature type="domain" description="bHLH" evidence="2">
    <location>
        <begin position="49"/>
        <end position="101"/>
    </location>
</feature>
<feature type="region of interest" description="Disordered" evidence="3">
    <location>
        <begin position="1"/>
        <end position="60"/>
    </location>
</feature>
<feature type="compositionally biased region" description="Low complexity" evidence="3">
    <location>
        <begin position="1"/>
        <end position="23"/>
    </location>
</feature>
<feature type="compositionally biased region" description="Gly residues" evidence="3">
    <location>
        <begin position="32"/>
        <end position="45"/>
    </location>
</feature>
<feature type="compositionally biased region" description="Low complexity" evidence="3">
    <location>
        <begin position="46"/>
        <end position="55"/>
    </location>
</feature>
<reference key="1">
    <citation type="journal article" date="2006" name="Nature">
        <title>DNA sequence and analysis of human chromosome 8.</title>
        <authorList>
            <person name="Nusbaum C."/>
            <person name="Mikkelsen T.S."/>
            <person name="Zody M.C."/>
            <person name="Asakawa S."/>
            <person name="Taudien S."/>
            <person name="Garber M."/>
            <person name="Kodira C.D."/>
            <person name="Schueler M.G."/>
            <person name="Shimizu A."/>
            <person name="Whittaker C.A."/>
            <person name="Chang J.L."/>
            <person name="Cuomo C.A."/>
            <person name="Dewar K."/>
            <person name="FitzGerald M.G."/>
            <person name="Yang X."/>
            <person name="Allen N.R."/>
            <person name="Anderson S."/>
            <person name="Asakawa T."/>
            <person name="Blechschmidt K."/>
            <person name="Bloom T."/>
            <person name="Borowsky M.L."/>
            <person name="Butler J."/>
            <person name="Cook A."/>
            <person name="Corum B."/>
            <person name="DeArellano K."/>
            <person name="DeCaprio D."/>
            <person name="Dooley K.T."/>
            <person name="Dorris L. III"/>
            <person name="Engels R."/>
            <person name="Gloeckner G."/>
            <person name="Hafez N."/>
            <person name="Hagopian D.S."/>
            <person name="Hall J.L."/>
            <person name="Ishikawa S.K."/>
            <person name="Jaffe D.B."/>
            <person name="Kamat A."/>
            <person name="Kudoh J."/>
            <person name="Lehmann R."/>
            <person name="Lokitsang T."/>
            <person name="Macdonald P."/>
            <person name="Major J.E."/>
            <person name="Matthews C.D."/>
            <person name="Mauceli E."/>
            <person name="Menzel U."/>
            <person name="Mihalev A.H."/>
            <person name="Minoshima S."/>
            <person name="Murayama Y."/>
            <person name="Naylor J.W."/>
            <person name="Nicol R."/>
            <person name="Nguyen C."/>
            <person name="O'Leary S.B."/>
            <person name="O'Neill K."/>
            <person name="Parker S.C.J."/>
            <person name="Polley A."/>
            <person name="Raymond C.K."/>
            <person name="Reichwald K."/>
            <person name="Rodriguez J."/>
            <person name="Sasaki T."/>
            <person name="Schilhabel M."/>
            <person name="Siddiqui R."/>
            <person name="Smith C.L."/>
            <person name="Sneddon T.P."/>
            <person name="Talamas J.A."/>
            <person name="Tenzin P."/>
            <person name="Topham K."/>
            <person name="Venkataraman V."/>
            <person name="Wen G."/>
            <person name="Yamazaki S."/>
            <person name="Young S.K."/>
            <person name="Zeng Q."/>
            <person name="Zimmer A.R."/>
            <person name="Rosenthal A."/>
            <person name="Birren B.W."/>
            <person name="Platzer M."/>
            <person name="Shimizu N."/>
            <person name="Lander E.S."/>
        </authorList>
    </citation>
    <scope>NUCLEOTIDE SEQUENCE [LARGE SCALE GENOMIC DNA]</scope>
</reference>
<reference key="2">
    <citation type="journal article" date="2002" name="Mech. Dev.">
        <title>Exhaustive identification of human class II basic helix-loop-helix proteins by virtual library screening.</title>
        <authorList>
            <person name="McLellan A.S."/>
            <person name="Langlands K."/>
            <person name="Kealey T."/>
        </authorList>
    </citation>
    <scope>IDENTIFICATION</scope>
</reference>
<name>TCF24_HUMAN</name>
<gene>
    <name type="primary">TCF24</name>
</gene>
<protein>
    <recommendedName>
        <fullName>Transcription factor 24</fullName>
        <shortName>TCF-24</shortName>
    </recommendedName>
</protein>
<comment type="function">
    <text evidence="1">Putative transcription factor.</text>
</comment>
<comment type="subunit">
    <text evidence="1">Efficient DNA binding requires dimerization with another bHLH protein.</text>
</comment>
<comment type="interaction">
    <interactant intactId="EBI-18239606">
        <id>Q7RTU0</id>
    </interactant>
    <interactant intactId="EBI-10694180">
        <id>Q8TD91-2</id>
        <label>MAGEC3</label>
    </interactant>
    <organismsDiffer>false</organismsDiffer>
    <experiments>3</experiments>
</comment>
<comment type="interaction">
    <interactant intactId="EBI-18239606">
        <id>Q7RTU0</id>
    </interactant>
    <interactant intactId="EBI-13636688">
        <id>P15884-3</id>
        <label>TCF4</label>
    </interactant>
    <organismsDiffer>false</organismsDiffer>
    <experiments>3</experiments>
</comment>
<comment type="subcellular location">
    <subcellularLocation>
        <location evidence="2">Nucleus</location>
    </subcellularLocation>
</comment>
<comment type="sequence caution" evidence="4">
    <conflict type="erroneous gene model prediction">
        <sequence resource="EMBL-CDS" id="DAA00306"/>
    </conflict>
</comment>
<accession>Q7RTU0</accession>
<accession>H3BPR9</accession>
<dbReference type="EMBL" id="AC110998">
    <property type="status" value="NOT_ANNOTATED_CDS"/>
    <property type="molecule type" value="Genomic_DNA"/>
</dbReference>
<dbReference type="EMBL" id="BK000144">
    <property type="protein sequence ID" value="DAA00306.1"/>
    <property type="status" value="ALT_SEQ"/>
    <property type="molecule type" value="Genomic_DNA"/>
</dbReference>
<dbReference type="CCDS" id="CCDS59103.1"/>
<dbReference type="RefSeq" id="NP_001180431.1">
    <property type="nucleotide sequence ID" value="NM_001193502.2"/>
</dbReference>
<dbReference type="RefSeq" id="XP_016868429.1">
    <property type="nucleotide sequence ID" value="XM_017012940.1"/>
</dbReference>
<dbReference type="SMR" id="Q7RTU0"/>
<dbReference type="BioGRID" id="934215">
    <property type="interactions" value="4"/>
</dbReference>
<dbReference type="FunCoup" id="Q7RTU0">
    <property type="interactions" value="130"/>
</dbReference>
<dbReference type="IntAct" id="Q7RTU0">
    <property type="interactions" value="2"/>
</dbReference>
<dbReference type="STRING" id="9606.ENSP00000455444"/>
<dbReference type="iPTMnet" id="Q7RTU0"/>
<dbReference type="PhosphoSitePlus" id="Q7RTU0"/>
<dbReference type="BioMuta" id="TCF24"/>
<dbReference type="DMDM" id="408360247"/>
<dbReference type="MassIVE" id="Q7RTU0"/>
<dbReference type="PaxDb" id="9606-ENSP00000455444"/>
<dbReference type="PeptideAtlas" id="Q7RTU0"/>
<dbReference type="Antibodypedia" id="77224">
    <property type="antibodies" value="3 antibodies from 1 providers"/>
</dbReference>
<dbReference type="DNASU" id="100129654"/>
<dbReference type="Ensembl" id="ENST00000563496.2">
    <property type="protein sequence ID" value="ENSP00000455444.1"/>
    <property type="gene ID" value="ENSG00000261787.2"/>
</dbReference>
<dbReference type="GeneID" id="100129654"/>
<dbReference type="KEGG" id="hsa:100129654"/>
<dbReference type="MANE-Select" id="ENST00000563496.2">
    <property type="protein sequence ID" value="ENSP00000455444.1"/>
    <property type="RefSeq nucleotide sequence ID" value="NM_001193502.2"/>
    <property type="RefSeq protein sequence ID" value="NP_001180431.1"/>
</dbReference>
<dbReference type="UCSC" id="uc022avl.1">
    <property type="organism name" value="human"/>
</dbReference>
<dbReference type="AGR" id="HGNC:32275"/>
<dbReference type="CTD" id="100129654"/>
<dbReference type="DisGeNET" id="100129654"/>
<dbReference type="GeneCards" id="TCF24"/>
<dbReference type="HGNC" id="HGNC:32275">
    <property type="gene designation" value="TCF24"/>
</dbReference>
<dbReference type="HPA" id="ENSG00000261787">
    <property type="expression patterns" value="Tissue enhanced (kidney, testis)"/>
</dbReference>
<dbReference type="neXtProt" id="NX_Q7RTU0"/>
<dbReference type="OpenTargets" id="ENSG00000261787"/>
<dbReference type="VEuPathDB" id="HostDB:ENSG00000261787"/>
<dbReference type="eggNOG" id="KOG4029">
    <property type="taxonomic scope" value="Eukaryota"/>
</dbReference>
<dbReference type="GeneTree" id="ENSGT00940000162447"/>
<dbReference type="HOGENOM" id="CLU_101416_3_0_1"/>
<dbReference type="InParanoid" id="Q7RTU0"/>
<dbReference type="OMA" id="GEKANHS"/>
<dbReference type="OrthoDB" id="10063436at2759"/>
<dbReference type="PAN-GO" id="Q7RTU0">
    <property type="GO annotations" value="4 GO annotations based on evolutionary models"/>
</dbReference>
<dbReference type="PhylomeDB" id="Q7RTU0"/>
<dbReference type="TreeFam" id="TF350742"/>
<dbReference type="PathwayCommons" id="Q7RTU0"/>
<dbReference type="SignaLink" id="Q7RTU0"/>
<dbReference type="BioGRID-ORCS" id="100129654">
    <property type="hits" value="19 hits in 1151 CRISPR screens"/>
</dbReference>
<dbReference type="GenomeRNAi" id="100129654"/>
<dbReference type="Pharos" id="Q7RTU0">
    <property type="development level" value="Tdark"/>
</dbReference>
<dbReference type="PRO" id="PR:Q7RTU0"/>
<dbReference type="Proteomes" id="UP000005640">
    <property type="component" value="Chromosome 8"/>
</dbReference>
<dbReference type="RNAct" id="Q7RTU0">
    <property type="molecule type" value="protein"/>
</dbReference>
<dbReference type="Bgee" id="ENSG00000261787">
    <property type="expression patterns" value="Expressed in male germ line stem cell (sensu Vertebrata) in testis and 46 other cell types or tissues"/>
</dbReference>
<dbReference type="GO" id="GO:0005634">
    <property type="term" value="C:nucleus"/>
    <property type="evidence" value="ECO:0007669"/>
    <property type="project" value="UniProtKB-SubCell"/>
</dbReference>
<dbReference type="GO" id="GO:0000981">
    <property type="term" value="F:DNA-binding transcription factor activity, RNA polymerase II-specific"/>
    <property type="evidence" value="ECO:0000318"/>
    <property type="project" value="GO_Central"/>
</dbReference>
<dbReference type="GO" id="GO:0046983">
    <property type="term" value="F:protein dimerization activity"/>
    <property type="evidence" value="ECO:0007669"/>
    <property type="project" value="InterPro"/>
</dbReference>
<dbReference type="GO" id="GO:0000977">
    <property type="term" value="F:RNA polymerase II transcription regulatory region sequence-specific DNA binding"/>
    <property type="evidence" value="ECO:0000318"/>
    <property type="project" value="GO_Central"/>
</dbReference>
<dbReference type="GO" id="GO:0032502">
    <property type="term" value="P:developmental process"/>
    <property type="evidence" value="ECO:0000318"/>
    <property type="project" value="GO_Central"/>
</dbReference>
<dbReference type="GO" id="GO:0006357">
    <property type="term" value="P:regulation of transcription by RNA polymerase II"/>
    <property type="evidence" value="ECO:0000318"/>
    <property type="project" value="GO_Central"/>
</dbReference>
<dbReference type="CDD" id="cd19710">
    <property type="entry name" value="bHLH_TS_TCF24"/>
    <property type="match status" value="1"/>
</dbReference>
<dbReference type="Gene3D" id="4.10.280.10">
    <property type="entry name" value="Helix-loop-helix DNA-binding domain"/>
    <property type="match status" value="1"/>
</dbReference>
<dbReference type="InterPro" id="IPR011598">
    <property type="entry name" value="bHLH_dom"/>
</dbReference>
<dbReference type="InterPro" id="IPR050283">
    <property type="entry name" value="E-box_TF_Regulators"/>
</dbReference>
<dbReference type="InterPro" id="IPR036638">
    <property type="entry name" value="HLH_DNA-bd_sf"/>
</dbReference>
<dbReference type="PANTHER" id="PTHR23349">
    <property type="entry name" value="BASIC HELIX-LOOP-HELIX TRANSCRIPTION FACTOR, TWIST"/>
    <property type="match status" value="1"/>
</dbReference>
<dbReference type="PANTHER" id="PTHR23349:SF48">
    <property type="entry name" value="TRANSCRIPTION FACTOR 24"/>
    <property type="match status" value="1"/>
</dbReference>
<dbReference type="Pfam" id="PF00010">
    <property type="entry name" value="HLH"/>
    <property type="match status" value="1"/>
</dbReference>
<dbReference type="SMART" id="SM00353">
    <property type="entry name" value="HLH"/>
    <property type="match status" value="1"/>
</dbReference>
<dbReference type="SUPFAM" id="SSF47459">
    <property type="entry name" value="HLH, helix-loop-helix DNA-binding domain"/>
    <property type="match status" value="1"/>
</dbReference>
<dbReference type="PROSITE" id="PS50888">
    <property type="entry name" value="BHLH"/>
    <property type="match status" value="1"/>
</dbReference>